<organism>
    <name type="scientific">Marinobacter nauticus (strain ATCC 700491 / DSM 11845 / VT8)</name>
    <name type="common">Marinobacter aquaeolei</name>
    <dbReference type="NCBI Taxonomy" id="351348"/>
    <lineage>
        <taxon>Bacteria</taxon>
        <taxon>Pseudomonadati</taxon>
        <taxon>Pseudomonadota</taxon>
        <taxon>Gammaproteobacteria</taxon>
        <taxon>Pseudomonadales</taxon>
        <taxon>Marinobacteraceae</taxon>
        <taxon>Marinobacter</taxon>
    </lineage>
</organism>
<feature type="chain" id="PRO_1000052601" description="Large ribosomal subunit protein uL22">
    <location>
        <begin position="1"/>
        <end position="110"/>
    </location>
</feature>
<gene>
    <name evidence="1" type="primary">rplV</name>
    <name type="ordered locus">Maqu_0724</name>
</gene>
<evidence type="ECO:0000255" key="1">
    <source>
        <dbReference type="HAMAP-Rule" id="MF_01331"/>
    </source>
</evidence>
<evidence type="ECO:0000305" key="2"/>
<proteinExistence type="inferred from homology"/>
<comment type="function">
    <text evidence="1">This protein binds specifically to 23S rRNA; its binding is stimulated by other ribosomal proteins, e.g. L4, L17, and L20. It is important during the early stages of 50S assembly. It makes multiple contacts with different domains of the 23S rRNA in the assembled 50S subunit and ribosome (By similarity).</text>
</comment>
<comment type="function">
    <text evidence="1">The globular domain of the protein is located near the polypeptide exit tunnel on the outside of the subunit, while an extended beta-hairpin is found that lines the wall of the exit tunnel in the center of the 70S ribosome.</text>
</comment>
<comment type="subunit">
    <text evidence="1">Part of the 50S ribosomal subunit.</text>
</comment>
<comment type="similarity">
    <text evidence="1">Belongs to the universal ribosomal protein uL22 family.</text>
</comment>
<keyword id="KW-0687">Ribonucleoprotein</keyword>
<keyword id="KW-0689">Ribosomal protein</keyword>
<keyword id="KW-0694">RNA-binding</keyword>
<keyword id="KW-0699">rRNA-binding</keyword>
<accession>A1TYK2</accession>
<name>RL22_MARN8</name>
<sequence>MEVAAKYKGARLSAQKARLVADQVRGKAVEDALNILTFSPKKAAVVIKKALESAIANAEHNEGLDVDDLRVSTVMVDEGPTLKRIKARAKGRADRIFKRTCHITVKVADK</sequence>
<dbReference type="EMBL" id="CP000514">
    <property type="protein sequence ID" value="ABM17821.1"/>
    <property type="molecule type" value="Genomic_DNA"/>
</dbReference>
<dbReference type="RefSeq" id="WP_008940674.1">
    <property type="nucleotide sequence ID" value="NC_008740.1"/>
</dbReference>
<dbReference type="SMR" id="A1TYK2"/>
<dbReference type="STRING" id="351348.Maqu_0724"/>
<dbReference type="GeneID" id="94722535"/>
<dbReference type="KEGG" id="maq:Maqu_0724"/>
<dbReference type="eggNOG" id="COG0091">
    <property type="taxonomic scope" value="Bacteria"/>
</dbReference>
<dbReference type="HOGENOM" id="CLU_083987_3_3_6"/>
<dbReference type="OrthoDB" id="9805969at2"/>
<dbReference type="Proteomes" id="UP000000998">
    <property type="component" value="Chromosome"/>
</dbReference>
<dbReference type="GO" id="GO:0022625">
    <property type="term" value="C:cytosolic large ribosomal subunit"/>
    <property type="evidence" value="ECO:0007669"/>
    <property type="project" value="TreeGrafter"/>
</dbReference>
<dbReference type="GO" id="GO:0019843">
    <property type="term" value="F:rRNA binding"/>
    <property type="evidence" value="ECO:0007669"/>
    <property type="project" value="UniProtKB-UniRule"/>
</dbReference>
<dbReference type="GO" id="GO:0003735">
    <property type="term" value="F:structural constituent of ribosome"/>
    <property type="evidence" value="ECO:0007669"/>
    <property type="project" value="InterPro"/>
</dbReference>
<dbReference type="GO" id="GO:0006412">
    <property type="term" value="P:translation"/>
    <property type="evidence" value="ECO:0007669"/>
    <property type="project" value="UniProtKB-UniRule"/>
</dbReference>
<dbReference type="CDD" id="cd00336">
    <property type="entry name" value="Ribosomal_L22"/>
    <property type="match status" value="1"/>
</dbReference>
<dbReference type="FunFam" id="3.90.470.10:FF:000001">
    <property type="entry name" value="50S ribosomal protein L22"/>
    <property type="match status" value="1"/>
</dbReference>
<dbReference type="Gene3D" id="3.90.470.10">
    <property type="entry name" value="Ribosomal protein L22/L17"/>
    <property type="match status" value="1"/>
</dbReference>
<dbReference type="HAMAP" id="MF_01331_B">
    <property type="entry name" value="Ribosomal_uL22_B"/>
    <property type="match status" value="1"/>
</dbReference>
<dbReference type="InterPro" id="IPR001063">
    <property type="entry name" value="Ribosomal_uL22"/>
</dbReference>
<dbReference type="InterPro" id="IPR005727">
    <property type="entry name" value="Ribosomal_uL22_bac/chlpt-type"/>
</dbReference>
<dbReference type="InterPro" id="IPR047867">
    <property type="entry name" value="Ribosomal_uL22_bac/org-type"/>
</dbReference>
<dbReference type="InterPro" id="IPR018260">
    <property type="entry name" value="Ribosomal_uL22_CS"/>
</dbReference>
<dbReference type="InterPro" id="IPR036394">
    <property type="entry name" value="Ribosomal_uL22_sf"/>
</dbReference>
<dbReference type="NCBIfam" id="TIGR01044">
    <property type="entry name" value="rplV_bact"/>
    <property type="match status" value="1"/>
</dbReference>
<dbReference type="PANTHER" id="PTHR13501">
    <property type="entry name" value="CHLOROPLAST 50S RIBOSOMAL PROTEIN L22-RELATED"/>
    <property type="match status" value="1"/>
</dbReference>
<dbReference type="PANTHER" id="PTHR13501:SF8">
    <property type="entry name" value="LARGE RIBOSOMAL SUBUNIT PROTEIN UL22M"/>
    <property type="match status" value="1"/>
</dbReference>
<dbReference type="Pfam" id="PF00237">
    <property type="entry name" value="Ribosomal_L22"/>
    <property type="match status" value="1"/>
</dbReference>
<dbReference type="SUPFAM" id="SSF54843">
    <property type="entry name" value="Ribosomal protein L22"/>
    <property type="match status" value="1"/>
</dbReference>
<dbReference type="PROSITE" id="PS00464">
    <property type="entry name" value="RIBOSOMAL_L22"/>
    <property type="match status" value="1"/>
</dbReference>
<reference key="1">
    <citation type="journal article" date="2011" name="Appl. Environ. Microbiol.">
        <title>Genomic potential of Marinobacter aquaeolei, a biogeochemical 'opportunitroph'.</title>
        <authorList>
            <person name="Singer E."/>
            <person name="Webb E.A."/>
            <person name="Nelson W.C."/>
            <person name="Heidelberg J.F."/>
            <person name="Ivanova N."/>
            <person name="Pati A."/>
            <person name="Edwards K.J."/>
        </authorList>
    </citation>
    <scope>NUCLEOTIDE SEQUENCE [LARGE SCALE GENOMIC DNA]</scope>
    <source>
        <strain>ATCC 700491 / DSM 11845 / VT8</strain>
    </source>
</reference>
<protein>
    <recommendedName>
        <fullName evidence="1">Large ribosomal subunit protein uL22</fullName>
    </recommendedName>
    <alternativeName>
        <fullName evidence="2">50S ribosomal protein L22</fullName>
    </alternativeName>
</protein>